<organism>
    <name type="scientific">Methylococcus capsulatus (strain ATCC 33009 / NCIMB 11132 / Bath)</name>
    <dbReference type="NCBI Taxonomy" id="243233"/>
    <lineage>
        <taxon>Bacteria</taxon>
        <taxon>Pseudomonadati</taxon>
        <taxon>Pseudomonadota</taxon>
        <taxon>Gammaproteobacteria</taxon>
        <taxon>Methylococcales</taxon>
        <taxon>Methylococcaceae</taxon>
        <taxon>Methylococcus</taxon>
    </lineage>
</organism>
<sequence>MHPTAARTGVLLINLGTPEAPTPKAVRRYLREFLSDPRVVEIPRVLWWPILNLVVLRTRSRKSAHAYRTIWTERGSPLLAYTQDLRDRLAADGRFAAVEIAMRYGNPSVRLKLEELRNRVETIVVLPLYPQYSAATTGSAFDAVCDTLKTWRHIPSLHFIGDYHRSPKYLEAVAASIRSFWQEHGRPERLVFSFHGLPKCCIDRGDPYASQCQATAQGIARLLELSDDEWLLTYQSRFGRAEWLRPYCIDTLRELPSQGIRHVDVVCPGFAVDCLETLEEIAIANRNEFLGAGGKNYRYIPALNASPAHADILIGLLEPYLALTA</sequence>
<evidence type="ECO:0000255" key="1">
    <source>
        <dbReference type="HAMAP-Rule" id="MF_00323"/>
    </source>
</evidence>
<accession>Q607T4</accession>
<reference key="1">
    <citation type="journal article" date="2004" name="PLoS Biol.">
        <title>Genomic insights into methanotrophy: the complete genome sequence of Methylococcus capsulatus (Bath).</title>
        <authorList>
            <person name="Ward N.L."/>
            <person name="Larsen O."/>
            <person name="Sakwa J."/>
            <person name="Bruseth L."/>
            <person name="Khouri H.M."/>
            <person name="Durkin A.S."/>
            <person name="Dimitrov G."/>
            <person name="Jiang L."/>
            <person name="Scanlan D."/>
            <person name="Kang K.H."/>
            <person name="Lewis M.R."/>
            <person name="Nelson K.E."/>
            <person name="Methe B.A."/>
            <person name="Wu M."/>
            <person name="Heidelberg J.F."/>
            <person name="Paulsen I.T."/>
            <person name="Fouts D.E."/>
            <person name="Ravel J."/>
            <person name="Tettelin H."/>
            <person name="Ren Q."/>
            <person name="Read T.D."/>
            <person name="DeBoy R.T."/>
            <person name="Seshadri R."/>
            <person name="Salzberg S.L."/>
            <person name="Jensen H.B."/>
            <person name="Birkeland N.K."/>
            <person name="Nelson W.C."/>
            <person name="Dodson R.J."/>
            <person name="Grindhaug S.H."/>
            <person name="Holt I.E."/>
            <person name="Eidhammer I."/>
            <person name="Jonasen I."/>
            <person name="Vanaken S."/>
            <person name="Utterback T.R."/>
            <person name="Feldblyum T.V."/>
            <person name="Fraser C.M."/>
            <person name="Lillehaug J.R."/>
            <person name="Eisen J.A."/>
        </authorList>
    </citation>
    <scope>NUCLEOTIDE SEQUENCE [LARGE SCALE GENOMIC DNA]</scope>
    <source>
        <strain>ATCC 33009 / NCIMB 11132 / Bath</strain>
    </source>
</reference>
<feature type="chain" id="PRO_0000175163" description="Ferrochelatase">
    <location>
        <begin position="1"/>
        <end position="325"/>
    </location>
</feature>
<feature type="binding site" evidence="1">
    <location>
        <position position="195"/>
    </location>
    <ligand>
        <name>Fe cation</name>
        <dbReference type="ChEBI" id="CHEBI:24875"/>
    </ligand>
</feature>
<feature type="binding site" evidence="1">
    <location>
        <position position="276"/>
    </location>
    <ligand>
        <name>Fe cation</name>
        <dbReference type="ChEBI" id="CHEBI:24875"/>
    </ligand>
</feature>
<proteinExistence type="inferred from homology"/>
<dbReference type="EC" id="4.98.1.1" evidence="1"/>
<dbReference type="EMBL" id="AE017282">
    <property type="protein sequence ID" value="AAU92282.1"/>
    <property type="molecule type" value="Genomic_DNA"/>
</dbReference>
<dbReference type="RefSeq" id="WP_010960929.1">
    <property type="nucleotide sequence ID" value="NC_002977.6"/>
</dbReference>
<dbReference type="SMR" id="Q607T4"/>
<dbReference type="STRING" id="243233.MCA1671"/>
<dbReference type="GeneID" id="88223927"/>
<dbReference type="KEGG" id="mca:MCA1671"/>
<dbReference type="eggNOG" id="COG0276">
    <property type="taxonomic scope" value="Bacteria"/>
</dbReference>
<dbReference type="HOGENOM" id="CLU_018884_0_0_6"/>
<dbReference type="UniPathway" id="UPA00252">
    <property type="reaction ID" value="UER00325"/>
</dbReference>
<dbReference type="Proteomes" id="UP000006821">
    <property type="component" value="Chromosome"/>
</dbReference>
<dbReference type="GO" id="GO:0005737">
    <property type="term" value="C:cytoplasm"/>
    <property type="evidence" value="ECO:0007669"/>
    <property type="project" value="UniProtKB-SubCell"/>
</dbReference>
<dbReference type="GO" id="GO:0004325">
    <property type="term" value="F:ferrochelatase activity"/>
    <property type="evidence" value="ECO:0007669"/>
    <property type="project" value="UniProtKB-UniRule"/>
</dbReference>
<dbReference type="GO" id="GO:0046872">
    <property type="term" value="F:metal ion binding"/>
    <property type="evidence" value="ECO:0007669"/>
    <property type="project" value="UniProtKB-KW"/>
</dbReference>
<dbReference type="GO" id="GO:0006783">
    <property type="term" value="P:heme biosynthetic process"/>
    <property type="evidence" value="ECO:0007669"/>
    <property type="project" value="UniProtKB-UniRule"/>
</dbReference>
<dbReference type="CDD" id="cd00419">
    <property type="entry name" value="Ferrochelatase_C"/>
    <property type="match status" value="1"/>
</dbReference>
<dbReference type="CDD" id="cd03411">
    <property type="entry name" value="Ferrochelatase_N"/>
    <property type="match status" value="1"/>
</dbReference>
<dbReference type="FunFam" id="3.40.50.1400:FF:000002">
    <property type="entry name" value="Ferrochelatase"/>
    <property type="match status" value="1"/>
</dbReference>
<dbReference type="Gene3D" id="3.40.50.1400">
    <property type="match status" value="2"/>
</dbReference>
<dbReference type="HAMAP" id="MF_00323">
    <property type="entry name" value="Ferrochelatase"/>
    <property type="match status" value="1"/>
</dbReference>
<dbReference type="InterPro" id="IPR001015">
    <property type="entry name" value="Ferrochelatase"/>
</dbReference>
<dbReference type="InterPro" id="IPR019772">
    <property type="entry name" value="Ferrochelatase_AS"/>
</dbReference>
<dbReference type="InterPro" id="IPR033644">
    <property type="entry name" value="Ferrochelatase_C"/>
</dbReference>
<dbReference type="InterPro" id="IPR033659">
    <property type="entry name" value="Ferrochelatase_N"/>
</dbReference>
<dbReference type="NCBIfam" id="TIGR00109">
    <property type="entry name" value="hemH"/>
    <property type="match status" value="1"/>
</dbReference>
<dbReference type="PANTHER" id="PTHR11108">
    <property type="entry name" value="FERROCHELATASE"/>
    <property type="match status" value="1"/>
</dbReference>
<dbReference type="PANTHER" id="PTHR11108:SF1">
    <property type="entry name" value="FERROCHELATASE, MITOCHONDRIAL"/>
    <property type="match status" value="1"/>
</dbReference>
<dbReference type="Pfam" id="PF00762">
    <property type="entry name" value="Ferrochelatase"/>
    <property type="match status" value="1"/>
</dbReference>
<dbReference type="SUPFAM" id="SSF53800">
    <property type="entry name" value="Chelatase"/>
    <property type="match status" value="1"/>
</dbReference>
<dbReference type="PROSITE" id="PS00534">
    <property type="entry name" value="FERROCHELATASE"/>
    <property type="match status" value="1"/>
</dbReference>
<gene>
    <name evidence="1" type="primary">hemH</name>
    <name type="ordered locus">MCA1671</name>
</gene>
<comment type="function">
    <text evidence="1">Catalyzes the ferrous insertion into protoporphyrin IX.</text>
</comment>
<comment type="catalytic activity">
    <reaction evidence="1">
        <text>heme b + 2 H(+) = protoporphyrin IX + Fe(2+)</text>
        <dbReference type="Rhea" id="RHEA:22584"/>
        <dbReference type="ChEBI" id="CHEBI:15378"/>
        <dbReference type="ChEBI" id="CHEBI:29033"/>
        <dbReference type="ChEBI" id="CHEBI:57306"/>
        <dbReference type="ChEBI" id="CHEBI:60344"/>
        <dbReference type="EC" id="4.98.1.1"/>
    </reaction>
</comment>
<comment type="pathway">
    <text evidence="1">Porphyrin-containing compound metabolism; protoheme biosynthesis; protoheme from protoporphyrin-IX: step 1/1.</text>
</comment>
<comment type="subcellular location">
    <subcellularLocation>
        <location evidence="1">Cytoplasm</location>
    </subcellularLocation>
</comment>
<comment type="similarity">
    <text evidence="1">Belongs to the ferrochelatase family.</text>
</comment>
<keyword id="KW-0963">Cytoplasm</keyword>
<keyword id="KW-0350">Heme biosynthesis</keyword>
<keyword id="KW-0408">Iron</keyword>
<keyword id="KW-0456">Lyase</keyword>
<keyword id="KW-0479">Metal-binding</keyword>
<keyword id="KW-0627">Porphyrin biosynthesis</keyword>
<keyword id="KW-1185">Reference proteome</keyword>
<name>HEMH_METCA</name>
<protein>
    <recommendedName>
        <fullName evidence="1">Ferrochelatase</fullName>
        <ecNumber evidence="1">4.98.1.1</ecNumber>
    </recommendedName>
    <alternativeName>
        <fullName evidence="1">Heme synthase</fullName>
    </alternativeName>
    <alternativeName>
        <fullName evidence="1">Protoheme ferro-lyase</fullName>
    </alternativeName>
</protein>